<name>THIC_SYNJB</name>
<dbReference type="EC" id="4.1.99.17" evidence="1"/>
<dbReference type="EMBL" id="CP000240">
    <property type="protein sequence ID" value="ABD01276.1"/>
    <property type="molecule type" value="Genomic_DNA"/>
</dbReference>
<dbReference type="RefSeq" id="WP_011431945.1">
    <property type="nucleotide sequence ID" value="NC_007776.1"/>
</dbReference>
<dbReference type="SMR" id="Q2JPK6"/>
<dbReference type="STRING" id="321332.CYB_0278"/>
<dbReference type="KEGG" id="cyb:CYB_0278"/>
<dbReference type="eggNOG" id="COG0422">
    <property type="taxonomic scope" value="Bacteria"/>
</dbReference>
<dbReference type="HOGENOM" id="CLU_013181_2_1_3"/>
<dbReference type="OrthoDB" id="9805897at2"/>
<dbReference type="UniPathway" id="UPA00060"/>
<dbReference type="Proteomes" id="UP000001938">
    <property type="component" value="Chromosome"/>
</dbReference>
<dbReference type="GO" id="GO:0005829">
    <property type="term" value="C:cytosol"/>
    <property type="evidence" value="ECO:0007669"/>
    <property type="project" value="TreeGrafter"/>
</dbReference>
<dbReference type="GO" id="GO:0051539">
    <property type="term" value="F:4 iron, 4 sulfur cluster binding"/>
    <property type="evidence" value="ECO:0007669"/>
    <property type="project" value="UniProtKB-KW"/>
</dbReference>
<dbReference type="GO" id="GO:0016830">
    <property type="term" value="F:carbon-carbon lyase activity"/>
    <property type="evidence" value="ECO:0007669"/>
    <property type="project" value="InterPro"/>
</dbReference>
<dbReference type="GO" id="GO:0008270">
    <property type="term" value="F:zinc ion binding"/>
    <property type="evidence" value="ECO:0007669"/>
    <property type="project" value="UniProtKB-UniRule"/>
</dbReference>
<dbReference type="GO" id="GO:0009228">
    <property type="term" value="P:thiamine biosynthetic process"/>
    <property type="evidence" value="ECO:0007669"/>
    <property type="project" value="UniProtKB-KW"/>
</dbReference>
<dbReference type="GO" id="GO:0009229">
    <property type="term" value="P:thiamine diphosphate biosynthetic process"/>
    <property type="evidence" value="ECO:0007669"/>
    <property type="project" value="UniProtKB-UniRule"/>
</dbReference>
<dbReference type="FunFam" id="3.20.20.540:FF:000001">
    <property type="entry name" value="Phosphomethylpyrimidine synthase"/>
    <property type="match status" value="1"/>
</dbReference>
<dbReference type="Gene3D" id="6.10.250.620">
    <property type="match status" value="1"/>
</dbReference>
<dbReference type="Gene3D" id="3.20.20.540">
    <property type="entry name" value="Radical SAM ThiC family, central domain"/>
    <property type="match status" value="1"/>
</dbReference>
<dbReference type="HAMAP" id="MF_00089">
    <property type="entry name" value="ThiC"/>
    <property type="match status" value="1"/>
</dbReference>
<dbReference type="InterPro" id="IPR037509">
    <property type="entry name" value="ThiC"/>
</dbReference>
<dbReference type="InterPro" id="IPR038521">
    <property type="entry name" value="ThiC/Bza_core_dom"/>
</dbReference>
<dbReference type="InterPro" id="IPR002817">
    <property type="entry name" value="ThiC/BzaA/B"/>
</dbReference>
<dbReference type="NCBIfam" id="NF006763">
    <property type="entry name" value="PRK09284.1"/>
    <property type="match status" value="1"/>
</dbReference>
<dbReference type="NCBIfam" id="NF009895">
    <property type="entry name" value="PRK13352.1"/>
    <property type="match status" value="1"/>
</dbReference>
<dbReference type="NCBIfam" id="TIGR00190">
    <property type="entry name" value="thiC"/>
    <property type="match status" value="1"/>
</dbReference>
<dbReference type="PANTHER" id="PTHR30557:SF1">
    <property type="entry name" value="PHOSPHOMETHYLPYRIMIDINE SYNTHASE, CHLOROPLASTIC"/>
    <property type="match status" value="1"/>
</dbReference>
<dbReference type="PANTHER" id="PTHR30557">
    <property type="entry name" value="THIAMINE BIOSYNTHESIS PROTEIN THIC"/>
    <property type="match status" value="1"/>
</dbReference>
<dbReference type="Pfam" id="PF01964">
    <property type="entry name" value="ThiC_Rad_SAM"/>
    <property type="match status" value="1"/>
</dbReference>
<dbReference type="SFLD" id="SFLDF00407">
    <property type="entry name" value="phosphomethylpyrimidine_syntha"/>
    <property type="match status" value="1"/>
</dbReference>
<dbReference type="SFLD" id="SFLDG01114">
    <property type="entry name" value="phosphomethylpyrimidine_syntha"/>
    <property type="match status" value="1"/>
</dbReference>
<dbReference type="SFLD" id="SFLDS00113">
    <property type="entry name" value="Radical_SAM_Phosphomethylpyrim"/>
    <property type="match status" value="1"/>
</dbReference>
<sequence length="455" mass="50660">MRSEWVARRRGQANVTQMHFARQGVITEEMEYVAQRENLPPELIRSEVARGRMIIPANINHTNLEPMCIGIASRCKVNANIGASPTSSGLAEELEKLKLAIKYGADTVMDLSTGGGDLDEIRTAIIQASPVPIGTVPIYQALESVHGKVEKLSAEDILHVIEKQAQQGVDYMTIHAGILIEYLPLVRHRLTGIVSRGGGILARWMLAHHKQNPLYTHFRDIIEIFKKYDVSFSLGDSLRPGCLHDASDEAQLAELKTLGQLTRMAWEHDVQVMVEGPGHVPMDQIEFNVRKQMEECDEAPFYVLGPLVTDIAAGYDHISSAIGAALAGWYGAAMLCYVTPKEHLGLPNAEDVRNGLIAYKIAAHAADIARHRPGARDRDDEMSRARYNFDWNRQFELSLDPERAREYHDETLPADIYKTAEFCSMCGPKFCPMQTKMDAEALSELEQFLAAQPTG</sequence>
<organism>
    <name type="scientific">Synechococcus sp. (strain JA-2-3B'a(2-13))</name>
    <name type="common">Cyanobacteria bacterium Yellowstone B-Prime</name>
    <dbReference type="NCBI Taxonomy" id="321332"/>
    <lineage>
        <taxon>Bacteria</taxon>
        <taxon>Bacillati</taxon>
        <taxon>Cyanobacteriota</taxon>
        <taxon>Cyanophyceae</taxon>
        <taxon>Synechococcales</taxon>
        <taxon>Synechococcaceae</taxon>
        <taxon>Synechococcus</taxon>
    </lineage>
</organism>
<reference key="1">
    <citation type="journal article" date="2007" name="ISME J.">
        <title>Population level functional diversity in a microbial community revealed by comparative genomic and metagenomic analyses.</title>
        <authorList>
            <person name="Bhaya D."/>
            <person name="Grossman A.R."/>
            <person name="Steunou A.-S."/>
            <person name="Khuri N."/>
            <person name="Cohan F.M."/>
            <person name="Hamamura N."/>
            <person name="Melendrez M.C."/>
            <person name="Bateson M.M."/>
            <person name="Ward D.M."/>
            <person name="Heidelberg J.F."/>
        </authorList>
    </citation>
    <scope>NUCLEOTIDE SEQUENCE [LARGE SCALE GENOMIC DNA]</scope>
    <source>
        <strain>JA-2-3B'a(2-13)</strain>
    </source>
</reference>
<keyword id="KW-0004">4Fe-4S</keyword>
<keyword id="KW-0408">Iron</keyword>
<keyword id="KW-0411">Iron-sulfur</keyword>
<keyword id="KW-0456">Lyase</keyword>
<keyword id="KW-0479">Metal-binding</keyword>
<keyword id="KW-1185">Reference proteome</keyword>
<keyword id="KW-0949">S-adenosyl-L-methionine</keyword>
<keyword id="KW-0784">Thiamine biosynthesis</keyword>
<keyword id="KW-0862">Zinc</keyword>
<gene>
    <name evidence="1" type="primary">thiC</name>
    <name type="ordered locus">CYB_0278</name>
</gene>
<proteinExistence type="inferred from homology"/>
<evidence type="ECO:0000255" key="1">
    <source>
        <dbReference type="HAMAP-Rule" id="MF_00089"/>
    </source>
</evidence>
<accession>Q2JPK6</accession>
<comment type="function">
    <text evidence="1">Catalyzes the synthesis of the hydroxymethylpyrimidine phosphate (HMP-P) moiety of thiamine from aminoimidazole ribotide (AIR) in a radical S-adenosyl-L-methionine (SAM)-dependent reaction.</text>
</comment>
<comment type="catalytic activity">
    <reaction evidence="1">
        <text>5-amino-1-(5-phospho-beta-D-ribosyl)imidazole + S-adenosyl-L-methionine = 4-amino-2-methyl-5-(phosphooxymethyl)pyrimidine + CO + 5'-deoxyadenosine + formate + L-methionine + 3 H(+)</text>
        <dbReference type="Rhea" id="RHEA:24840"/>
        <dbReference type="ChEBI" id="CHEBI:15378"/>
        <dbReference type="ChEBI" id="CHEBI:15740"/>
        <dbReference type="ChEBI" id="CHEBI:17245"/>
        <dbReference type="ChEBI" id="CHEBI:17319"/>
        <dbReference type="ChEBI" id="CHEBI:57844"/>
        <dbReference type="ChEBI" id="CHEBI:58354"/>
        <dbReference type="ChEBI" id="CHEBI:59789"/>
        <dbReference type="ChEBI" id="CHEBI:137981"/>
        <dbReference type="EC" id="4.1.99.17"/>
    </reaction>
</comment>
<comment type="cofactor">
    <cofactor evidence="1">
        <name>[4Fe-4S] cluster</name>
        <dbReference type="ChEBI" id="CHEBI:49883"/>
    </cofactor>
    <text evidence="1">Binds 1 [4Fe-4S] cluster per subunit. The cluster is coordinated with 3 cysteines and an exchangeable S-adenosyl-L-methionine.</text>
</comment>
<comment type="pathway">
    <text evidence="1">Cofactor biosynthesis; thiamine diphosphate biosynthesis.</text>
</comment>
<comment type="similarity">
    <text evidence="1">Belongs to the ThiC family.</text>
</comment>
<feature type="chain" id="PRO_0000242308" description="Phosphomethylpyrimidine synthase">
    <location>
        <begin position="1"/>
        <end position="455"/>
    </location>
</feature>
<feature type="binding site" evidence="1">
    <location>
        <position position="80"/>
    </location>
    <ligand>
        <name>substrate</name>
    </ligand>
</feature>
<feature type="binding site" evidence="1">
    <location>
        <position position="109"/>
    </location>
    <ligand>
        <name>substrate</name>
    </ligand>
</feature>
<feature type="binding site" evidence="1">
    <location>
        <position position="139"/>
    </location>
    <ligand>
        <name>substrate</name>
    </ligand>
</feature>
<feature type="binding site" evidence="1">
    <location>
        <position position="175"/>
    </location>
    <ligand>
        <name>substrate</name>
    </ligand>
</feature>
<feature type="binding site" evidence="1">
    <location>
        <begin position="195"/>
        <end position="197"/>
    </location>
    <ligand>
        <name>substrate</name>
    </ligand>
</feature>
<feature type="binding site" evidence="1">
    <location>
        <begin position="236"/>
        <end position="239"/>
    </location>
    <ligand>
        <name>substrate</name>
    </ligand>
</feature>
<feature type="binding site" evidence="1">
    <location>
        <position position="275"/>
    </location>
    <ligand>
        <name>substrate</name>
    </ligand>
</feature>
<feature type="binding site" evidence="1">
    <location>
        <position position="279"/>
    </location>
    <ligand>
        <name>Zn(2+)</name>
        <dbReference type="ChEBI" id="CHEBI:29105"/>
    </ligand>
</feature>
<feature type="binding site" evidence="1">
    <location>
        <position position="302"/>
    </location>
    <ligand>
        <name>substrate</name>
    </ligand>
</feature>
<feature type="binding site" evidence="1">
    <location>
        <position position="343"/>
    </location>
    <ligand>
        <name>Zn(2+)</name>
        <dbReference type="ChEBI" id="CHEBI:29105"/>
    </ligand>
</feature>
<feature type="binding site" evidence="1">
    <location>
        <position position="423"/>
    </location>
    <ligand>
        <name>[4Fe-4S] cluster</name>
        <dbReference type="ChEBI" id="CHEBI:49883"/>
        <note>4Fe-4S-S-AdoMet</note>
    </ligand>
</feature>
<feature type="binding site" evidence="1">
    <location>
        <position position="426"/>
    </location>
    <ligand>
        <name>[4Fe-4S] cluster</name>
        <dbReference type="ChEBI" id="CHEBI:49883"/>
        <note>4Fe-4S-S-AdoMet</note>
    </ligand>
</feature>
<feature type="binding site" evidence="1">
    <location>
        <position position="431"/>
    </location>
    <ligand>
        <name>[4Fe-4S] cluster</name>
        <dbReference type="ChEBI" id="CHEBI:49883"/>
        <note>4Fe-4S-S-AdoMet</note>
    </ligand>
</feature>
<protein>
    <recommendedName>
        <fullName evidence="1">Phosphomethylpyrimidine synthase</fullName>
        <ecNumber evidence="1">4.1.99.17</ecNumber>
    </recommendedName>
    <alternativeName>
        <fullName evidence="1">Hydroxymethylpyrimidine phosphate synthase</fullName>
        <shortName evidence="1">HMP-P synthase</shortName>
        <shortName evidence="1">HMP-phosphate synthase</shortName>
        <shortName evidence="1">HMPP synthase</shortName>
    </alternativeName>
    <alternativeName>
        <fullName evidence="1">Thiamine biosynthesis protein ThiC</fullName>
    </alternativeName>
</protein>